<feature type="chain" id="PRO_1000140409" description="5-keto-4-deoxy-D-glucarate aldolase">
    <location>
        <begin position="1"/>
        <end position="256"/>
    </location>
</feature>
<feature type="active site" description="Proton acceptor" evidence="1">
    <location>
        <position position="50"/>
    </location>
</feature>
<feature type="binding site" evidence="1">
    <location>
        <position position="151"/>
    </location>
    <ligand>
        <name>substrate</name>
    </ligand>
</feature>
<feature type="binding site" evidence="1">
    <location>
        <position position="153"/>
    </location>
    <ligand>
        <name>Mg(2+)</name>
        <dbReference type="ChEBI" id="CHEBI:18420"/>
    </ligand>
</feature>
<feature type="binding site" evidence="1">
    <location>
        <position position="178"/>
    </location>
    <ligand>
        <name>substrate</name>
    </ligand>
</feature>
<feature type="binding site" evidence="1">
    <location>
        <position position="179"/>
    </location>
    <ligand>
        <name>Mg(2+)</name>
        <dbReference type="ChEBI" id="CHEBI:18420"/>
    </ligand>
</feature>
<feature type="binding site" evidence="1">
    <location>
        <position position="179"/>
    </location>
    <ligand>
        <name>substrate</name>
    </ligand>
</feature>
<feature type="site" description="Transition state stabilizer" evidence="1">
    <location>
        <position position="75"/>
    </location>
</feature>
<feature type="site" description="Increases basicity of active site His" evidence="1">
    <location>
        <position position="89"/>
    </location>
</feature>
<dbReference type="EC" id="4.1.2.20" evidence="1"/>
<dbReference type="EMBL" id="AP009240">
    <property type="protein sequence ID" value="BAG78934.1"/>
    <property type="molecule type" value="Genomic_DNA"/>
</dbReference>
<dbReference type="RefSeq" id="WP_001058227.1">
    <property type="nucleotide sequence ID" value="NC_011415.1"/>
</dbReference>
<dbReference type="SMR" id="B6I1J9"/>
<dbReference type="GeneID" id="93778860"/>
<dbReference type="KEGG" id="ecy:ECSE_3410"/>
<dbReference type="HOGENOM" id="CLU_059964_1_0_6"/>
<dbReference type="UniPathway" id="UPA00565">
    <property type="reaction ID" value="UER00630"/>
</dbReference>
<dbReference type="Proteomes" id="UP000008199">
    <property type="component" value="Chromosome"/>
</dbReference>
<dbReference type="GO" id="GO:0005737">
    <property type="term" value="C:cytoplasm"/>
    <property type="evidence" value="ECO:0007669"/>
    <property type="project" value="TreeGrafter"/>
</dbReference>
<dbReference type="GO" id="GO:0008672">
    <property type="term" value="F:2-dehydro-3-deoxyglucarate aldolase activity"/>
    <property type="evidence" value="ECO:0007669"/>
    <property type="project" value="UniProtKB-UniRule"/>
</dbReference>
<dbReference type="GO" id="GO:0000287">
    <property type="term" value="F:magnesium ion binding"/>
    <property type="evidence" value="ECO:0007669"/>
    <property type="project" value="UniProtKB-UniRule"/>
</dbReference>
<dbReference type="GO" id="GO:0042838">
    <property type="term" value="P:D-glucarate catabolic process"/>
    <property type="evidence" value="ECO:0007669"/>
    <property type="project" value="UniProtKB-UniRule"/>
</dbReference>
<dbReference type="GO" id="GO:0046392">
    <property type="term" value="P:galactarate catabolic process"/>
    <property type="evidence" value="ECO:0007669"/>
    <property type="project" value="UniProtKB-UniRule"/>
</dbReference>
<dbReference type="FunFam" id="3.20.20.60:FF:000004">
    <property type="entry name" value="5-keto-4-deoxy-D-glucarate aldolase"/>
    <property type="match status" value="1"/>
</dbReference>
<dbReference type="Gene3D" id="3.20.20.60">
    <property type="entry name" value="Phosphoenolpyruvate-binding domains"/>
    <property type="match status" value="1"/>
</dbReference>
<dbReference type="HAMAP" id="MF_01291">
    <property type="entry name" value="KDGluc_aldolase"/>
    <property type="match status" value="1"/>
</dbReference>
<dbReference type="InterPro" id="IPR005000">
    <property type="entry name" value="Aldolase/citrate-lyase_domain"/>
</dbReference>
<dbReference type="InterPro" id="IPR017648">
    <property type="entry name" value="GarL"/>
</dbReference>
<dbReference type="InterPro" id="IPR050251">
    <property type="entry name" value="HpcH-HpaI_aldolase"/>
</dbReference>
<dbReference type="InterPro" id="IPR015813">
    <property type="entry name" value="Pyrv/PenolPyrv_kinase-like_dom"/>
</dbReference>
<dbReference type="InterPro" id="IPR040442">
    <property type="entry name" value="Pyrv_kinase-like_dom_sf"/>
</dbReference>
<dbReference type="NCBIfam" id="TIGR03239">
    <property type="entry name" value="GarL"/>
    <property type="match status" value="1"/>
</dbReference>
<dbReference type="NCBIfam" id="NF007849">
    <property type="entry name" value="PRK10558.1"/>
    <property type="match status" value="1"/>
</dbReference>
<dbReference type="PANTHER" id="PTHR30502">
    <property type="entry name" value="2-KETO-3-DEOXY-L-RHAMNONATE ALDOLASE"/>
    <property type="match status" value="1"/>
</dbReference>
<dbReference type="PANTHER" id="PTHR30502:SF4">
    <property type="entry name" value="5-KETO-4-DEOXY-D-GLUCARATE ALDOLASE"/>
    <property type="match status" value="1"/>
</dbReference>
<dbReference type="Pfam" id="PF03328">
    <property type="entry name" value="HpcH_HpaI"/>
    <property type="match status" value="1"/>
</dbReference>
<dbReference type="SUPFAM" id="SSF51621">
    <property type="entry name" value="Phosphoenolpyruvate/pyruvate domain"/>
    <property type="match status" value="1"/>
</dbReference>
<sequence length="256" mass="27399">MNNDVFPNKFKAALAAKQVQIGCWSALSNPISTEVLGLAGFDWLVLDGEHAPNDISTFIPQLMALKGSASAPVVRVPTNEPVIIKRLLDIGFYNFLIPFVETKEEAEQAVASTRYPPEGIRGVSVSHRANMFGTVADYFAQSNKNITILVQIESQQGVDNVDAIAATEGVDGIFVGPSDLAAALGHLGNASHPDVQKAIQHIFNRASAHGKPSGILAPVEADARRYLEWGATFVAVGSDLGVFRSATQKLADTFKK</sequence>
<reference key="1">
    <citation type="journal article" date="2008" name="DNA Res.">
        <title>Complete genome sequence and comparative analysis of the wild-type commensal Escherichia coli strain SE11 isolated from a healthy adult.</title>
        <authorList>
            <person name="Oshima K."/>
            <person name="Toh H."/>
            <person name="Ogura Y."/>
            <person name="Sasamoto H."/>
            <person name="Morita H."/>
            <person name="Park S.-H."/>
            <person name="Ooka T."/>
            <person name="Iyoda S."/>
            <person name="Taylor T.D."/>
            <person name="Hayashi T."/>
            <person name="Itoh K."/>
            <person name="Hattori M."/>
        </authorList>
    </citation>
    <scope>NUCLEOTIDE SEQUENCE [LARGE SCALE GENOMIC DNA]</scope>
    <source>
        <strain>SE11</strain>
    </source>
</reference>
<accession>B6I1J9</accession>
<proteinExistence type="inferred from homology"/>
<evidence type="ECO:0000255" key="1">
    <source>
        <dbReference type="HAMAP-Rule" id="MF_01291"/>
    </source>
</evidence>
<comment type="function">
    <text evidence="1">Catalyzes the reversible retro-aldol cleavage of both 5-keto-4-deoxy-D-glucarate and 2-keto-3-deoxy-D-glucarate to pyruvate and tartronic semialdehyde.</text>
</comment>
<comment type="catalytic activity">
    <reaction evidence="1">
        <text>5-dehydro-4-deoxy-D-glucarate = 2-hydroxy-3-oxopropanoate + pyruvate</text>
        <dbReference type="Rhea" id="RHEA:27726"/>
        <dbReference type="ChEBI" id="CHEBI:15361"/>
        <dbReference type="ChEBI" id="CHEBI:42819"/>
        <dbReference type="ChEBI" id="CHEBI:57978"/>
    </reaction>
</comment>
<comment type="catalytic activity">
    <reaction evidence="1">
        <text>2-dehydro-3-deoxy-D-glucarate = 2-hydroxy-3-oxopropanoate + pyruvate</text>
        <dbReference type="Rhea" id="RHEA:10268"/>
        <dbReference type="ChEBI" id="CHEBI:15361"/>
        <dbReference type="ChEBI" id="CHEBI:57978"/>
        <dbReference type="ChEBI" id="CHEBI:58098"/>
        <dbReference type="EC" id="4.1.2.20"/>
    </reaction>
</comment>
<comment type="cofactor">
    <cofactor evidence="1">
        <name>Mg(2+)</name>
        <dbReference type="ChEBI" id="CHEBI:18420"/>
    </cofactor>
    <text evidence="1">Binds 1 Mg(2+) ion per subunit.</text>
</comment>
<comment type="pathway">
    <text evidence="1">Carbohydrate acid metabolism; galactarate degradation; D-glycerate from galactarate: step 2/3.</text>
</comment>
<comment type="subunit">
    <text evidence="1">Homohexamer; trimer of dimers.</text>
</comment>
<comment type="similarity">
    <text evidence="1">Belongs to the HpcH/HpaI aldolase family. KDGluc aldolase subfamily.</text>
</comment>
<keyword id="KW-0456">Lyase</keyword>
<keyword id="KW-0460">Magnesium</keyword>
<keyword id="KW-0479">Metal-binding</keyword>
<protein>
    <recommendedName>
        <fullName evidence="1">5-keto-4-deoxy-D-glucarate aldolase</fullName>
        <shortName evidence="1">KDGluc aldolase</shortName>
        <shortName evidence="1">KDGlucA</shortName>
        <ecNumber evidence="1">4.1.2.20</ecNumber>
    </recommendedName>
    <alternativeName>
        <fullName evidence="1">2-dehydro-3-deoxy-D-glucarate aldolase</fullName>
    </alternativeName>
    <alternativeName>
        <fullName evidence="1">2-keto-3-deoxy-D-glucarate aldolase</fullName>
    </alternativeName>
    <alternativeName>
        <fullName evidence="1">5-dehydro-4-deoxy-D-glucarate aldolase</fullName>
    </alternativeName>
    <alternativeName>
        <fullName evidence="1">Alpha-keto-beta-deoxy-D-glucarate aldolase</fullName>
    </alternativeName>
</protein>
<name>GARL_ECOSE</name>
<gene>
    <name evidence="1" type="primary">garL</name>
    <name type="ordered locus">ECSE_3410</name>
</gene>
<organism>
    <name type="scientific">Escherichia coli (strain SE11)</name>
    <dbReference type="NCBI Taxonomy" id="409438"/>
    <lineage>
        <taxon>Bacteria</taxon>
        <taxon>Pseudomonadati</taxon>
        <taxon>Pseudomonadota</taxon>
        <taxon>Gammaproteobacteria</taxon>
        <taxon>Enterobacterales</taxon>
        <taxon>Enterobacteriaceae</taxon>
        <taxon>Escherichia</taxon>
    </lineage>
</organism>